<sequence>MVKNSFISLIPQEEKEENRGSVEFQVFSFTNKIRRLTSHLELHRKDYLSQRGLRKILGKRQRLLAYLSKKNRVRYNKLIGQLDIREPKTR</sequence>
<name>RR15_ACOCL</name>
<reference key="1">
    <citation type="journal article" date="2005" name="Mol. Biol. Evol.">
        <title>Analysis of Acorus calamus chloroplast genome and its phylogenetic implications.</title>
        <authorList>
            <person name="Goremykin V.V."/>
            <person name="Holland B."/>
            <person name="Hirsch-Ernst K.I."/>
            <person name="Hellwig F.H."/>
        </authorList>
    </citation>
    <scope>NUCLEOTIDE SEQUENCE [LARGE SCALE GENOMIC DNA]</scope>
</reference>
<comment type="subunit">
    <text evidence="1">Part of the 30S ribosomal subunit.</text>
</comment>
<comment type="subcellular location">
    <subcellularLocation>
        <location>Plastid</location>
        <location>Chloroplast</location>
    </subcellularLocation>
</comment>
<comment type="similarity">
    <text evidence="2">Belongs to the universal ribosomal protein uS15 family.</text>
</comment>
<comment type="sequence caution" evidence="2">
    <conflict type="erroneous initiation">
        <sequence resource="EMBL-CDS" id="CAI53851"/>
    </conflict>
</comment>
<keyword id="KW-0150">Chloroplast</keyword>
<keyword id="KW-0934">Plastid</keyword>
<keyword id="KW-0687">Ribonucleoprotein</keyword>
<keyword id="KW-0689">Ribosomal protein</keyword>
<evidence type="ECO:0000250" key="1"/>
<evidence type="ECO:0000305" key="2"/>
<accession>Q3V4X7</accession>
<dbReference type="EMBL" id="AJ879453">
    <property type="protein sequence ID" value="CAI53851.1"/>
    <property type="status" value="ALT_INIT"/>
    <property type="molecule type" value="Genomic_DNA"/>
</dbReference>
<dbReference type="RefSeq" id="YP_319820.2">
    <property type="nucleotide sequence ID" value="NC_007407.1"/>
</dbReference>
<dbReference type="SMR" id="Q3V4X7"/>
<dbReference type="GeneID" id="3677455"/>
<dbReference type="GO" id="GO:0009507">
    <property type="term" value="C:chloroplast"/>
    <property type="evidence" value="ECO:0007669"/>
    <property type="project" value="UniProtKB-SubCell"/>
</dbReference>
<dbReference type="GO" id="GO:1990904">
    <property type="term" value="C:ribonucleoprotein complex"/>
    <property type="evidence" value="ECO:0007669"/>
    <property type="project" value="UniProtKB-KW"/>
</dbReference>
<dbReference type="GO" id="GO:0005840">
    <property type="term" value="C:ribosome"/>
    <property type="evidence" value="ECO:0007669"/>
    <property type="project" value="UniProtKB-KW"/>
</dbReference>
<dbReference type="GO" id="GO:0003735">
    <property type="term" value="F:structural constituent of ribosome"/>
    <property type="evidence" value="ECO:0007669"/>
    <property type="project" value="InterPro"/>
</dbReference>
<dbReference type="GO" id="GO:0006412">
    <property type="term" value="P:translation"/>
    <property type="evidence" value="ECO:0007669"/>
    <property type="project" value="UniProtKB-UniRule"/>
</dbReference>
<dbReference type="CDD" id="cd00353">
    <property type="entry name" value="Ribosomal_S15p_S13e"/>
    <property type="match status" value="1"/>
</dbReference>
<dbReference type="Gene3D" id="1.10.287.10">
    <property type="entry name" value="S15/NS1, RNA-binding"/>
    <property type="match status" value="1"/>
</dbReference>
<dbReference type="HAMAP" id="MF_01343_B">
    <property type="entry name" value="Ribosomal_uS15_B"/>
    <property type="match status" value="1"/>
</dbReference>
<dbReference type="InterPro" id="IPR000589">
    <property type="entry name" value="Ribosomal_uS15"/>
</dbReference>
<dbReference type="InterPro" id="IPR005290">
    <property type="entry name" value="Ribosomal_uS15_bac-type"/>
</dbReference>
<dbReference type="InterPro" id="IPR009068">
    <property type="entry name" value="uS15_NS1_RNA-bd_sf"/>
</dbReference>
<dbReference type="NCBIfam" id="TIGR00952">
    <property type="entry name" value="S15_bact"/>
    <property type="match status" value="1"/>
</dbReference>
<dbReference type="PANTHER" id="PTHR23321">
    <property type="entry name" value="RIBOSOMAL PROTEIN S15, BACTERIAL AND ORGANELLAR"/>
    <property type="match status" value="1"/>
</dbReference>
<dbReference type="PANTHER" id="PTHR23321:SF26">
    <property type="entry name" value="SMALL RIBOSOMAL SUBUNIT PROTEIN US15M"/>
    <property type="match status" value="1"/>
</dbReference>
<dbReference type="Pfam" id="PF00312">
    <property type="entry name" value="Ribosomal_S15"/>
    <property type="match status" value="1"/>
</dbReference>
<dbReference type="SMART" id="SM01387">
    <property type="entry name" value="Ribosomal_S15"/>
    <property type="match status" value="1"/>
</dbReference>
<dbReference type="SUPFAM" id="SSF47060">
    <property type="entry name" value="S15/NS1 RNA-binding domain"/>
    <property type="match status" value="1"/>
</dbReference>
<dbReference type="PROSITE" id="PS00362">
    <property type="entry name" value="RIBOSOMAL_S15"/>
    <property type="match status" value="1"/>
</dbReference>
<feature type="chain" id="PRO_0000115625" description="Small ribosomal subunit protein uS15c">
    <location>
        <begin position="1"/>
        <end position="90"/>
    </location>
</feature>
<geneLocation type="chloroplast"/>
<proteinExistence type="inferred from homology"/>
<gene>
    <name type="primary">rps15</name>
</gene>
<organism>
    <name type="scientific">Acorus calamus</name>
    <name type="common">Sweet flag</name>
    <dbReference type="NCBI Taxonomy" id="4465"/>
    <lineage>
        <taxon>Eukaryota</taxon>
        <taxon>Viridiplantae</taxon>
        <taxon>Streptophyta</taxon>
        <taxon>Embryophyta</taxon>
        <taxon>Tracheophyta</taxon>
        <taxon>Spermatophyta</taxon>
        <taxon>Magnoliopsida</taxon>
        <taxon>Liliopsida</taxon>
        <taxon>Acoraceae</taxon>
        <taxon>Acorus</taxon>
    </lineage>
</organism>
<protein>
    <recommendedName>
        <fullName evidence="2">Small ribosomal subunit protein uS15c</fullName>
    </recommendedName>
    <alternativeName>
        <fullName>30S ribosomal protein S15, chloroplastic</fullName>
    </alternativeName>
</protein>